<protein>
    <recommendedName>
        <fullName evidence="1 14">DNA-binding transcriptional activator HetR</fullName>
        <ecNumber evidence="1 17">3.4.21.-</ecNumber>
    </recommendedName>
    <alternativeName>
        <fullName evidence="1">Heterocyst differentiation control protein</fullName>
    </alternativeName>
    <alternativeName>
        <fullName evidence="13">Master regulator of differentiation</fullName>
    </alternativeName>
</protein>
<dbReference type="EC" id="3.4.21.-" evidence="1 17"/>
<dbReference type="EMBL" id="M37779">
    <property type="protein sequence ID" value="AAA21998.1"/>
    <property type="molecule type" value="Genomic_DNA"/>
</dbReference>
<dbReference type="EMBL" id="BA000019">
    <property type="protein sequence ID" value="BAB74038.1"/>
    <property type="molecule type" value="Genomic_DNA"/>
</dbReference>
<dbReference type="PIR" id="A38705">
    <property type="entry name" value="A38705"/>
</dbReference>
<dbReference type="PIR" id="AD2098">
    <property type="entry name" value="AD2098"/>
</dbReference>
<dbReference type="RefSeq" id="WP_010996495.1">
    <property type="nucleotide sequence ID" value="NZ_RSCN01000004.1"/>
</dbReference>
<dbReference type="PDB" id="4HRI">
    <property type="method" value="X-ray"/>
    <property type="resolution" value="2.95 A"/>
    <property type="chains" value="A/B=1-299"/>
</dbReference>
<dbReference type="PDB" id="4LH9">
    <property type="method" value="X-ray"/>
    <property type="resolution" value="2.05 A"/>
    <property type="chains" value="A=256-295"/>
</dbReference>
<dbReference type="PDB" id="4YNL">
    <property type="method" value="X-ray"/>
    <property type="resolution" value="2.10 A"/>
    <property type="chains" value="A/B/M/N=219-299"/>
</dbReference>
<dbReference type="PDB" id="4YRV">
    <property type="method" value="X-ray"/>
    <property type="resolution" value="2.80 A"/>
    <property type="chains" value="A/B=1-299"/>
</dbReference>
<dbReference type="PDBsum" id="4HRI"/>
<dbReference type="PDBsum" id="4LH9"/>
<dbReference type="PDBsum" id="4YNL"/>
<dbReference type="PDBsum" id="4YRV"/>
<dbReference type="SMR" id="P27709"/>
<dbReference type="DIP" id="DIP-61232N"/>
<dbReference type="IntAct" id="P27709">
    <property type="interactions" value="1"/>
</dbReference>
<dbReference type="STRING" id="103690.gene:10494368"/>
<dbReference type="MEROPS" id="S48.001"/>
<dbReference type="GeneID" id="58722805"/>
<dbReference type="KEGG" id="ana:alr2339"/>
<dbReference type="eggNOG" id="ENOG502Z96Q">
    <property type="taxonomic scope" value="Bacteria"/>
</dbReference>
<dbReference type="OrthoDB" id="526832at2"/>
<dbReference type="EvolutionaryTrace" id="P27709"/>
<dbReference type="Proteomes" id="UP000002483">
    <property type="component" value="Chromosome"/>
</dbReference>
<dbReference type="GO" id="GO:0003677">
    <property type="term" value="F:DNA binding"/>
    <property type="evidence" value="ECO:0007669"/>
    <property type="project" value="UniProtKB-UniRule"/>
</dbReference>
<dbReference type="GO" id="GO:0042802">
    <property type="term" value="F:identical protein binding"/>
    <property type="evidence" value="ECO:0000353"/>
    <property type="project" value="IntAct"/>
</dbReference>
<dbReference type="GO" id="GO:0004252">
    <property type="term" value="F:serine-type endopeptidase activity"/>
    <property type="evidence" value="ECO:0007669"/>
    <property type="project" value="UniProtKB-UniRule"/>
</dbReference>
<dbReference type="GO" id="GO:0043158">
    <property type="term" value="P:heterocyst development"/>
    <property type="evidence" value="ECO:0007669"/>
    <property type="project" value="UniProtKB-UniRule"/>
</dbReference>
<dbReference type="GO" id="GO:0006508">
    <property type="term" value="P:proteolysis"/>
    <property type="evidence" value="ECO:0007669"/>
    <property type="project" value="UniProtKB-KW"/>
</dbReference>
<dbReference type="Gene3D" id="6.10.250.2740">
    <property type="match status" value="1"/>
</dbReference>
<dbReference type="Gene3D" id="1.10.10.1670">
    <property type="entry name" value="HetR, flap domain"/>
    <property type="match status" value="1"/>
</dbReference>
<dbReference type="Gene3D" id="1.10.10.1680">
    <property type="entry name" value="HetR, N-terminal DNA-binding domain"/>
    <property type="match status" value="1"/>
</dbReference>
<dbReference type="HAMAP" id="MF_00781">
    <property type="entry name" value="HetR"/>
    <property type="match status" value="1"/>
</dbReference>
<dbReference type="InterPro" id="IPR040949">
    <property type="entry name" value="HetR_C"/>
</dbReference>
<dbReference type="InterPro" id="IPR041936">
    <property type="entry name" value="HetR_DNA-bd_N"/>
</dbReference>
<dbReference type="InterPro" id="IPR041935">
    <property type="entry name" value="HetR_flap"/>
</dbReference>
<dbReference type="InterPro" id="IPR005319">
    <property type="entry name" value="Pept_S48_HetR"/>
</dbReference>
<dbReference type="NCBIfam" id="NF009718">
    <property type="entry name" value="PRK13245.1"/>
    <property type="match status" value="1"/>
</dbReference>
<dbReference type="Pfam" id="PF18460">
    <property type="entry name" value="HetR_C"/>
    <property type="match status" value="1"/>
</dbReference>
<dbReference type="Pfam" id="PF03574">
    <property type="entry name" value="Peptidase_S48"/>
    <property type="match status" value="1"/>
</dbReference>
<feature type="chain" id="PRO_0000208478" description="DNA-binding transcriptional activator HetR">
    <location>
        <begin position="1"/>
        <end position="299"/>
    </location>
</feature>
<feature type="region of interest" description="DNA-binding domain" evidence="6">
    <location>
        <begin position="1"/>
        <end position="98"/>
    </location>
</feature>
<feature type="region of interest" description="Flap domain" evidence="6">
    <location>
        <begin position="99"/>
        <end position="216"/>
    </location>
</feature>
<feature type="region of interest" description="Hood domain" evidence="6">
    <location>
        <begin position="217"/>
        <end position="299"/>
    </location>
</feature>
<feature type="active site" evidence="1 2">
    <location>
        <position position="152"/>
    </location>
</feature>
<feature type="binding site" evidence="6">
    <location>
        <begin position="34"/>
        <end position="40"/>
    </location>
    <ligand>
        <name>DNA</name>
        <dbReference type="ChEBI" id="CHEBI:16991"/>
    </ligand>
</feature>
<feature type="binding site" evidence="6">
    <location>
        <begin position="60"/>
        <end position="76"/>
    </location>
    <ligand>
        <name>DNA</name>
        <dbReference type="ChEBI" id="CHEBI:16991"/>
    </ligand>
</feature>
<feature type="binding site" evidence="6">
    <location>
        <begin position="179"/>
        <end position="181"/>
    </location>
    <ligand>
        <name>DNA</name>
        <dbReference type="ChEBI" id="CHEBI:16991"/>
    </ligand>
</feature>
<feature type="disulfide bond" description="Interchain" evidence="1 3 17">
    <location>
        <position position="48"/>
    </location>
</feature>
<feature type="mutagenesis site" description="Loss of homodimerization, does not form heterocysts, not dominant to wild-type protein. Does not bind DNA." evidence="3">
    <original>C</original>
    <variation>A</variation>
    <location>
        <position position="48"/>
    </location>
</feature>
<feature type="mutagenesis site" description="Behaves like wild-type." evidence="2">
    <original>S</original>
    <variation>A</variation>
    <location>
        <position position="142"/>
    </location>
</feature>
<feature type="mutagenesis site" description="Loss of protease activity, does not form heterocysts, does not down-regulate its own expression." evidence="2">
    <original>S</original>
    <variation>A</variation>
    <location>
        <position position="152"/>
    </location>
</feature>
<feature type="mutagenesis site" description="In strain 216; unable to control heterocyst differentiation, has no protease activity, homodimerizes, binds DNA, dominant to wild-type protein." evidence="3 4 9">
    <original>S</original>
    <variation>N</variation>
    <location>
        <position position="179"/>
    </location>
</feature>
<feature type="mutagenesis site" description="Greatly decreased PatS6 binding." evidence="6">
    <original>R</original>
    <variation>W</variation>
    <location>
        <position position="223"/>
    </location>
</feature>
<feature type="mutagenesis site" description="Loss of PatS6 binding, PatS6 no longer blocks DNA-binding." evidence="6">
    <original>E</original>
    <variation>A</variation>
    <location>
        <position position="253"/>
    </location>
</feature>
<feature type="mutagenesis site" description="Decreased PatS6 binding, PatS still blocks DNA-binding." evidence="6">
    <original>E</original>
    <variation>A</variation>
    <location>
        <position position="254"/>
    </location>
</feature>
<feature type="mutagenesis site" description="Decreased PatS6 binding." evidence="6">
    <original>D</original>
    <variation>A</variation>
    <location>
        <position position="256"/>
    </location>
</feature>
<feature type="mutagenesis site" description="Loss of PatS6 binding, PatS6 no longer blocks DNA-binding." evidence="6">
    <original>DEIIRTWAD</original>
    <variation>AEIIRTWAA</variation>
    <location>
        <begin position="270"/>
        <end position="278"/>
    </location>
</feature>
<feature type="mutagenesis site" description="Decreased PatS6 binding." evidence="6">
    <original>D</original>
    <variation>A</variation>
    <location>
        <position position="270"/>
    </location>
</feature>
<feature type="mutagenesis site" description="Decreased PatS6 binding." evidence="6">
    <original>D</original>
    <variation>A</variation>
    <location>
        <position position="278"/>
    </location>
</feature>
<feature type="helix" evidence="25">
    <location>
        <begin position="5"/>
        <end position="9"/>
    </location>
</feature>
<feature type="helix" evidence="25">
    <location>
        <begin position="15"/>
        <end position="28"/>
    </location>
</feature>
<feature type="helix" evidence="25">
    <location>
        <begin position="35"/>
        <end position="56"/>
    </location>
</feature>
<feature type="turn" evidence="22">
    <location>
        <begin position="57"/>
        <end position="59"/>
    </location>
</feature>
<feature type="helix" evidence="25">
    <location>
        <begin position="61"/>
        <end position="68"/>
    </location>
</feature>
<feature type="helix" evidence="25">
    <location>
        <begin position="72"/>
        <end position="87"/>
    </location>
</feature>
<feature type="strand" evidence="25">
    <location>
        <begin position="97"/>
        <end position="99"/>
    </location>
</feature>
<feature type="helix" evidence="25">
    <location>
        <begin position="101"/>
        <end position="104"/>
    </location>
</feature>
<feature type="helix" evidence="25">
    <location>
        <begin position="106"/>
        <end position="113"/>
    </location>
</feature>
<feature type="strand" evidence="25">
    <location>
        <begin position="118"/>
        <end position="120"/>
    </location>
</feature>
<feature type="strand" evidence="22">
    <location>
        <begin position="127"/>
        <end position="129"/>
    </location>
</feature>
<feature type="helix" evidence="25">
    <location>
        <begin position="130"/>
        <end position="139"/>
    </location>
</feature>
<feature type="helix" evidence="25">
    <location>
        <begin position="152"/>
        <end position="168"/>
    </location>
</feature>
<feature type="helix" evidence="25">
    <location>
        <begin position="172"/>
        <end position="174"/>
    </location>
</feature>
<feature type="helix" evidence="25">
    <location>
        <begin position="180"/>
        <end position="192"/>
    </location>
</feature>
<feature type="strand" evidence="25">
    <location>
        <begin position="195"/>
        <end position="199"/>
    </location>
</feature>
<feature type="strand" evidence="22">
    <location>
        <begin position="201"/>
        <end position="203"/>
    </location>
</feature>
<feature type="strand" evidence="25">
    <location>
        <begin position="207"/>
        <end position="210"/>
    </location>
</feature>
<feature type="helix" evidence="24">
    <location>
        <begin position="223"/>
        <end position="242"/>
    </location>
</feature>
<feature type="strand" evidence="24">
    <location>
        <begin position="249"/>
        <end position="257"/>
    </location>
</feature>
<feature type="helix" evidence="24">
    <location>
        <begin position="259"/>
        <end position="261"/>
    </location>
</feature>
<feature type="helix" evidence="23">
    <location>
        <begin position="263"/>
        <end position="280"/>
    </location>
</feature>
<feature type="strand" evidence="24">
    <location>
        <begin position="285"/>
        <end position="296"/>
    </location>
</feature>
<comment type="function">
    <text evidence="1">Controls heterocyst differentiation. Dimerization is required for DNA-binding. Has both a protease and a DNA-binding activity.</text>
</comment>
<comment type="function">
    <text evidence="3 4 5 9">Controls heterocyst differentiation; increased expression leads to more heterocysts than usual (PubMed:1840555). Has protease activity (PubMed:9560210). Binds the promoter regions of hetR, hepA and patS and is required for their expression. Dimerization is required for DNA-binding, DNA-binding is inhibited by the PatS6 peptide (PubMed:15051891). Binds the inverted repeat 5'-GTAGGCGAGGGGTCTAACCCCTCATTACC-3' found in the hetP promoter, required for expression of hetP (PubMed:20545862).</text>
</comment>
<comment type="activity regulation">
    <text evidence="9">Protease activity is inhibited by PMSF, suggesting this is a serine protease.</text>
</comment>
<comment type="subunit">
    <text evidence="1 3 6 7 10 17">Upon expression in E.coli most protein is monomeric, although varying amounts of homodimer can be seen (Probable). Homodimer; disulfide-linked (By similarity) (PubMed:15051891). Homodimer (PubMed:26576507, PubMed:27791130, Ref.10). Binds the 6 residue C-terminal peptide of PatS; one peptide binds to each subunit (PubMed:26576507). In bacterial two-hybrid assays interacts robustly with itself, Alr2902 and Alr3234 and more weakly with Als1930 (PubMed:27791130).</text>
</comment>
<comment type="interaction">
    <interactant intactId="EBI-15592082">
        <id>P27709</id>
    </interactant>
    <interactant intactId="EBI-15592082">
        <id>P27709</id>
        <label>hetR</label>
    </interactant>
    <organismsDiffer>false</organismsDiffer>
    <experiments>2</experiments>
</comment>
<comment type="developmental stage">
    <text evidence="16">Accumulates only in cells that are going to differentiate into heterocysts.</text>
</comment>
<comment type="induction">
    <text evidence="2 3 4 8 11">By nitrogen deficiency (at protein level). Activates its own expression (PubMed:10692362, PubMed:1840555, PubMed:8412673). Transcription increases quickly upon nitrogen reduction and remains high during heterocyst differentiation (at least 24 hours). Transcription is blocked by the C-terminal PatS peptide (sequence Arg-Gly-Ser-Gly-Arg) (PubMed:15051891).</text>
</comment>
<comment type="domain">
    <text evidence="6">Has an N-terminal DNA-binding domain that inserts into the DNA major groove, a central flap domain and C-terminal hood domain. The hood domain binds the PatS6 peptide. Upon PatS6 binding the flap domain probably moves considerably.</text>
</comment>
<comment type="PTM">
    <text evidence="15 17">Probably autodegrades.</text>
</comment>
<comment type="disruption phenotype">
    <text evidence="4 7">Unable to differentiate heterocysts, normal vegetative growth (PubMed:1840555, PubMed:27791130).</text>
</comment>
<comment type="miscellaneous">
    <text evidence="2 3 5 7 8">In Nostoc filaments, approximately every 10th vegetative cell terminally differentiates into a heterocyst specialized for nitrogen fixation under nitrogen deficiency (PubMed:10692362, PubMed:15051891, PubMed:20545862, PubMed:27791130, PubMed:8412673).</text>
</comment>
<comment type="similarity">
    <text evidence="1">Belongs to the peptidase S48 family.</text>
</comment>
<proteinExistence type="evidence at protein level"/>
<gene>
    <name evidence="1 12" type="primary">hetR</name>
    <name type="ordered locus">alr2339</name>
</gene>
<reference key="1">
    <citation type="journal article" date="1991" name="Genes Dev.">
        <title>Characterization of a gene controlling heterocyst differentiation in the cyanobacterium Anabaena 7120.</title>
        <authorList>
            <person name="Buikema W.J."/>
            <person name="Haselkorn R."/>
        </authorList>
    </citation>
    <scope>NUCLEOTIDE SEQUENCE [GENOMIC DNA]</scope>
    <scope>FUNCTION</scope>
    <scope>INDUCTION BY NITROGEN LIMITATION</scope>
    <scope>DISRUPTION PHENOTYPE</scope>
    <scope>MUTAGENESIS OF ASN-179</scope>
    <source>
        <strain>PCC 7120 / SAG 25.82 / UTEX 2576</strain>
    </source>
</reference>
<reference key="2">
    <citation type="journal article" date="2001" name="DNA Res.">
        <title>Complete genomic sequence of the filamentous nitrogen-fixing cyanobacterium Anabaena sp. strain PCC 7120.</title>
        <authorList>
            <person name="Kaneko T."/>
            <person name="Nakamura Y."/>
            <person name="Wolk C.P."/>
            <person name="Kuritz T."/>
            <person name="Sasamoto S."/>
            <person name="Watanabe A."/>
            <person name="Iriguchi M."/>
            <person name="Ishikawa A."/>
            <person name="Kawashima K."/>
            <person name="Kimura T."/>
            <person name="Kishida Y."/>
            <person name="Kohara M."/>
            <person name="Matsumoto M."/>
            <person name="Matsuno A."/>
            <person name="Muraki A."/>
            <person name="Nakazaki N."/>
            <person name="Shimpo S."/>
            <person name="Sugimoto M."/>
            <person name="Takazawa M."/>
            <person name="Yamada M."/>
            <person name="Yasuda M."/>
            <person name="Tabata S."/>
        </authorList>
    </citation>
    <scope>NUCLEOTIDE SEQUENCE [LARGE SCALE GENOMIC DNA]</scope>
    <source>
        <strain>PCC 7120 / SAG 25.82 / UTEX 2576</strain>
    </source>
</reference>
<reference key="3">
    <citation type="submission" date="2008-12" db="UniProtKB">
        <authorList>
            <person name="Chaurasia A.K."/>
            <person name="Apte S.K."/>
        </authorList>
    </citation>
    <scope>PROTEIN SEQUENCE OF 35-62; 77-83; 94-101; 166-198; 224-233 AND 251-274</scope>
    <scope>INDUCTION</scope>
</reference>
<reference key="4">
    <citation type="journal article" date="1998" name="Proc. Natl. Acad. Sci. U.S.A.">
        <title>Evidence that HetR protein is an unusual serine-type protease.</title>
        <authorList>
            <person name="Zhou R."/>
            <person name="Wei X."/>
            <person name="Jiang N."/>
            <person name="Li H."/>
            <person name="Dong Y."/>
            <person name="Hsi K.-L."/>
            <person name="Zhao J."/>
        </authorList>
    </citation>
    <scope>PROTEIN SEQUENCE OF 146-164</scope>
    <scope>PROTEASE ACTIVITY</scope>
    <scope>PROBABLE DISULFIDE BOND</scope>
    <scope>PROTEOLYTIC CLEAVAGE</scope>
    <scope>ACTIVITY REGULATION</scope>
    <scope>SUBUNIT</scope>
    <scope>MUTAGENESIS OF SER-179</scope>
    <source>
        <strain>PCC 7120 / SAG 25.82 / UTEX 2576</strain>
    </source>
</reference>
<reference key="5">
    <citation type="journal article" date="1993" name="Mol. Microbiol.">
        <title>Spatial expression and autoregulation of hetR, a gene involved in the control of heterocyst development in Anabaena.</title>
        <authorList>
            <person name="Black T.A."/>
            <person name="Cai Y."/>
            <person name="Wolk C.P."/>
        </authorList>
    </citation>
    <scope>DEVELOPMENTAL STAGE</scope>
    <scope>INDUCTION</scope>
    <source>
        <strain>PCC 7120 / SAG 25.82 / UTEX 2576</strain>
    </source>
</reference>
<reference key="6">
    <citation type="journal article" date="2000" name="J. Bacteriol.">
        <title>Identification of the active site of HetR protease and its requirement for heterocyst differentiation in the cyanobacterium Anabaena sp. strain PCC 7120.</title>
        <authorList>
            <person name="Dong Y."/>
            <person name="Huang X."/>
            <person name="Wu X.-Y."/>
            <person name="Zhao J."/>
        </authorList>
    </citation>
    <scope>ACTIVE SITE</scope>
    <scope>INDUCTION</scope>
    <scope>PROTEOLYTIC CLEAVAGE</scope>
    <scope>MUTAGENESIS OF SER-142 AND SER-152</scope>
    <source>
        <strain>PCC 7120 / SAG 25.82 / UTEX 2576</strain>
    </source>
</reference>
<reference key="7">
    <citation type="journal article" date="2004" name="Proc. Natl. Acad. Sci. U.S.A.">
        <title>HetR homodimer is a DNA-binding protein required for heterocyst differentiation, and the DNA-binding activity is inhibited by PatS.</title>
        <authorList>
            <person name="Huang X."/>
            <person name="Dong Y."/>
            <person name="Zhao J."/>
        </authorList>
    </citation>
    <scope>FUNCTION</scope>
    <scope>HOMODIMERIZATION</scope>
    <scope>INDUCTION</scope>
    <scope>DISULFIDE BOND</scope>
    <scope>DNA-BINDING</scope>
    <scope>MUTAGENESIS OF CYS-48 AND SER-179</scope>
    <source>
        <strain>PCC 7120 / SAG 25.82 / UTEX 2576</strain>
    </source>
</reference>
<reference key="8">
    <citation type="journal article" date="2010" name="Mol. Microbiol.">
        <title>Ectopic expression of hetP can partially bypass the need for hetR in heterocyst differentiation by Anabaena sp. strain PCC 7120.</title>
        <authorList>
            <person name="Higa K.C."/>
            <person name="Callahan S.M."/>
        </authorList>
    </citation>
    <scope>FUNCTION</scope>
    <scope>DNA-BINDING</scope>
    <source>
        <strain>PCC 7120 / SAG 25.82 / UTEX 2576</strain>
    </source>
</reference>
<reference key="9">
    <citation type="journal article" date="2016" name="Proc. Natl. Acad. Sci. U.S.A.">
        <title>The heterocyst regulatory protein HetP and its homologs modulate heterocyst commitment in Anabaena sp. strain PCC 7120.</title>
        <authorList>
            <person name="Videau P."/>
            <person name="Rivers O.S."/>
            <person name="Hurd K."/>
            <person name="Ushijima B."/>
            <person name="Oshiro R.T."/>
            <person name="Ende R.J."/>
            <person name="O'Hanlon S.M."/>
            <person name="Cozy L.M."/>
        </authorList>
    </citation>
    <scope>FUNCTION</scope>
    <scope>SUBUNIT</scope>
    <scope>DISRUPTION PHENOTYPE</scope>
    <source>
        <strain>PCC 7120 / SAG 25.82 / UTEX 2576</strain>
    </source>
</reference>
<reference evidence="18" key="10">
    <citation type="submission" date="2012-10" db="PDB data bank">
        <title>Structural and biochemical analyses of Anabaena HetR reveal insights into its binding to DNA targets and the inhibitory hexapeptide ERGSGR.</title>
        <authorList>
            <person name="Hu H.X."/>
            <person name="Jiang Y.L."/>
            <person name="Zhao M.X."/>
            <person name="Zhu P.F."/>
            <person name="Yang X.Y."/>
            <person name="Wen B."/>
            <person name="Zhang Z."/>
            <person name="Wu Q."/>
            <person name="Chen Y."/>
            <person name="Zhang C.C."/>
            <person name="Zhou C.Z."/>
        </authorList>
    </citation>
    <scope>X-RAY CRYSTALLOGRAPHY (2.95 ANGSTROMS) IN COMPLEX WITH DNA</scope>
</reference>
<reference evidence="19" key="11">
    <citation type="submission" date="2013-07" db="PDB data bank">
        <title>Structural and biochemical analyses of Anabaena HetR reveal insights into the cyanobacterial heterocyst development and pattern formation.</title>
        <authorList>
            <person name="Hu H.X."/>
            <person name="Jiang Y.L."/>
            <person name="Zhao M.X."/>
            <person name="Zhu P."/>
            <person name="Yang X."/>
            <person name="Ren Y.M."/>
            <person name="Wen B."/>
            <person name="Zhang Z."/>
            <person name="Wu Q."/>
            <person name="Chen Y."/>
            <person name="Zhang C.C."/>
            <person name="Zhou C.Z."/>
        </authorList>
    </citation>
    <scope>X-RAY CRYSTALLOGRAPHY (2.05 ANGSTROMS) OF 256-295</scope>
</reference>
<reference evidence="20 21" key="12">
    <citation type="journal article" date="2015" name="Sci. Rep.">
        <title>Structural insights into HetR-PatS interaction involved in cyanobacterial pattern formation.</title>
        <authorList>
            <person name="Hu H.X."/>
            <person name="Jiang Y.L."/>
            <person name="Zhao M.X."/>
            <person name="Cai K."/>
            <person name="Liu S."/>
            <person name="Wen B."/>
            <person name="Lv P."/>
            <person name="Zhang Y."/>
            <person name="Peng J."/>
            <person name="Zhong H."/>
            <person name="Yu H.M."/>
            <person name="Ren Y.M."/>
            <person name="Zhang Z."/>
            <person name="Tian C."/>
            <person name="Wu Q."/>
            <person name="Oliveberg M."/>
            <person name="Zhang C.C."/>
            <person name="Chen Y."/>
            <person name="Zhou C.Z."/>
        </authorList>
    </citation>
    <scope>X-RAY CRYSTALLOGRAPHY (2.10 ANGSTROMS) OF 219-299 (HOOD DOMAIN) IN COMPLEX WITH PATS PEPTIDE</scope>
    <scope>X-RAY CRYSTALLOGRAPHY (2.10 ANGSTROMS) IN COMPLEX WITH DNA</scope>
    <scope>SUBUNIT</scope>
    <scope>DOMAIN</scope>
    <scope>DNA-BINDING</scope>
    <scope>MUTAGENESIS OF ARG-223; GLU-253; GLU-254; ASP-256; 270-ASP--ASP-278; ASP-270 AND ASP-278</scope>
</reference>
<evidence type="ECO:0000255" key="1">
    <source>
        <dbReference type="HAMAP-Rule" id="MF_00781"/>
    </source>
</evidence>
<evidence type="ECO:0000269" key="2">
    <source>
    </source>
</evidence>
<evidence type="ECO:0000269" key="3">
    <source>
    </source>
</evidence>
<evidence type="ECO:0000269" key="4">
    <source>
    </source>
</evidence>
<evidence type="ECO:0000269" key="5">
    <source>
    </source>
</evidence>
<evidence type="ECO:0000269" key="6">
    <source>
    </source>
</evidence>
<evidence type="ECO:0000269" key="7">
    <source>
    </source>
</evidence>
<evidence type="ECO:0000269" key="8">
    <source>
    </source>
</evidence>
<evidence type="ECO:0000269" key="9">
    <source>
    </source>
</evidence>
<evidence type="ECO:0000269" key="10">
    <source ref="10"/>
</evidence>
<evidence type="ECO:0000269" key="11">
    <source ref="3"/>
</evidence>
<evidence type="ECO:0000303" key="12">
    <source>
    </source>
</evidence>
<evidence type="ECO:0000303" key="13">
    <source>
    </source>
</evidence>
<evidence type="ECO:0000303" key="14">
    <source>
    </source>
</evidence>
<evidence type="ECO:0000305" key="15">
    <source>
    </source>
</evidence>
<evidence type="ECO:0000305" key="16">
    <source>
    </source>
</evidence>
<evidence type="ECO:0000305" key="17">
    <source>
    </source>
</evidence>
<evidence type="ECO:0007744" key="18">
    <source>
        <dbReference type="PDB" id="4HRI"/>
    </source>
</evidence>
<evidence type="ECO:0007744" key="19">
    <source>
        <dbReference type="PDB" id="4LH9"/>
    </source>
</evidence>
<evidence type="ECO:0007744" key="20">
    <source>
        <dbReference type="PDB" id="4YNL"/>
    </source>
</evidence>
<evidence type="ECO:0007744" key="21">
    <source>
        <dbReference type="PDB" id="4YRV"/>
    </source>
</evidence>
<evidence type="ECO:0007829" key="22">
    <source>
        <dbReference type="PDB" id="4HRI"/>
    </source>
</evidence>
<evidence type="ECO:0007829" key="23">
    <source>
        <dbReference type="PDB" id="4LH9"/>
    </source>
</evidence>
<evidence type="ECO:0007829" key="24">
    <source>
        <dbReference type="PDB" id="4YNL"/>
    </source>
</evidence>
<evidence type="ECO:0007829" key="25">
    <source>
        <dbReference type="PDB" id="4YRV"/>
    </source>
</evidence>
<accession>P27709</accession>
<name>HETR_NOSS1</name>
<sequence>MSNDIDLIKRLGPSAMDQIMLYLAFSAMRTSGHRHGAFLDAAATAAKCAIYMTYLEQGQNLRMTGHLHHLEPKRVKIIVEEVRQALMEGKLLKTLGSQEPRYLIQFPYVWMEQYPWIPGRSRIPGTSLTSEEKRQIEHKLPSNLPDAQLVTSFEFLELIEFLHKRSQEDLPPEHRMELSEALAEHIKRRLLYSGTVTRIDSPWGMPFYALTRPFYAPADDQERTYIMVEDTARYFRMMKDWAEKRPNAMRALEELDVPPERWDEAMQELDEIIRTWADKYHQVGGIPMILQMVFGRKED</sequence>
<keyword id="KW-0002">3D-structure</keyword>
<keyword id="KW-0010">Activator</keyword>
<keyword id="KW-0068">Autocatalytic cleavage</keyword>
<keyword id="KW-0903">Direct protein sequencing</keyword>
<keyword id="KW-1015">Disulfide bond</keyword>
<keyword id="KW-0238">DNA-binding</keyword>
<keyword id="KW-0364">Heterocyst</keyword>
<keyword id="KW-0378">Hydrolase</keyword>
<keyword id="KW-0645">Protease</keyword>
<keyword id="KW-1185">Reference proteome</keyword>
<keyword id="KW-0720">Serine protease</keyword>
<keyword id="KW-0804">Transcription</keyword>
<keyword id="KW-0805">Transcription regulation</keyword>
<organism>
    <name type="scientific">Nostoc sp. (strain PCC 7120 / SAG 25.82 / UTEX 2576)</name>
    <dbReference type="NCBI Taxonomy" id="103690"/>
    <lineage>
        <taxon>Bacteria</taxon>
        <taxon>Bacillati</taxon>
        <taxon>Cyanobacteriota</taxon>
        <taxon>Cyanophyceae</taxon>
        <taxon>Nostocales</taxon>
        <taxon>Nostocaceae</taxon>
        <taxon>Nostoc</taxon>
    </lineage>
</organism>